<dbReference type="EC" id="2.4.1.301"/>
<dbReference type="EMBL" id="AJ582817">
    <property type="protein sequence ID" value="CAE46941.1"/>
    <property type="molecule type" value="Genomic_DNA"/>
</dbReference>
<dbReference type="SMR" id="Q65CC7"/>
<dbReference type="KEGG" id="ag:CAE46941"/>
<dbReference type="BioCyc" id="MetaCyc:MONOMER-17222"/>
<dbReference type="BRENDA" id="2.4.1.301">
    <property type="organism ID" value="6046"/>
</dbReference>
<dbReference type="SABIO-RK" id="Q65CC7"/>
<dbReference type="UniPathway" id="UPA00965"/>
<dbReference type="GO" id="GO:0016758">
    <property type="term" value="F:hexosyltransferase activity"/>
    <property type="evidence" value="ECO:0000314"/>
    <property type="project" value="UniProtKB"/>
</dbReference>
<dbReference type="GO" id="GO:1901133">
    <property type="term" value="P:kanamycin biosynthetic process"/>
    <property type="evidence" value="ECO:0000314"/>
    <property type="project" value="UniProtKB"/>
</dbReference>
<dbReference type="CDD" id="cd03819">
    <property type="entry name" value="GT4_WavL-like"/>
    <property type="match status" value="1"/>
</dbReference>
<dbReference type="FunFam" id="3.40.50.2000:FF:000391">
    <property type="entry name" value="2-deoxystreptamine N-acetyl-D-glucosaminyltransferase"/>
    <property type="match status" value="1"/>
</dbReference>
<dbReference type="Gene3D" id="3.40.50.2000">
    <property type="entry name" value="Glycogen Phosphorylase B"/>
    <property type="match status" value="2"/>
</dbReference>
<dbReference type="InterPro" id="IPR001296">
    <property type="entry name" value="Glyco_trans_1"/>
</dbReference>
<dbReference type="InterPro" id="IPR028098">
    <property type="entry name" value="Glyco_trans_4-like_N"/>
</dbReference>
<dbReference type="InterPro" id="IPR050194">
    <property type="entry name" value="Glycosyltransferase_grp1"/>
</dbReference>
<dbReference type="PANTHER" id="PTHR45947">
    <property type="entry name" value="SULFOQUINOVOSYL TRANSFERASE SQD2"/>
    <property type="match status" value="1"/>
</dbReference>
<dbReference type="PANTHER" id="PTHR45947:SF3">
    <property type="entry name" value="SULFOQUINOVOSYL TRANSFERASE SQD2"/>
    <property type="match status" value="1"/>
</dbReference>
<dbReference type="Pfam" id="PF13579">
    <property type="entry name" value="Glyco_trans_4_4"/>
    <property type="match status" value="1"/>
</dbReference>
<dbReference type="Pfam" id="PF00534">
    <property type="entry name" value="Glycos_transf_1"/>
    <property type="match status" value="1"/>
</dbReference>
<dbReference type="SUPFAM" id="SSF53756">
    <property type="entry name" value="UDP-Glycosyltransferase/glycogen phosphorylase"/>
    <property type="match status" value="1"/>
</dbReference>
<keyword id="KW-0045">Antibiotic biosynthesis</keyword>
<keyword id="KW-0328">Glycosyltransferase</keyword>
<keyword id="KW-0808">Transferase</keyword>
<evidence type="ECO:0000269" key="1">
    <source>
    </source>
</evidence>
<evidence type="ECO:0000305" key="2"/>
<organism>
    <name type="scientific">Streptomyces kanamyceticus</name>
    <dbReference type="NCBI Taxonomy" id="1967"/>
    <lineage>
        <taxon>Bacteria</taxon>
        <taxon>Bacillati</taxon>
        <taxon>Actinomycetota</taxon>
        <taxon>Actinomycetes</taxon>
        <taxon>Kitasatosporales</taxon>
        <taxon>Streptomycetaceae</taxon>
        <taxon>Streptomyces</taxon>
    </lineage>
</organism>
<name>KANE_STRKN</name>
<accession>Q65CC7</accession>
<reference key="1">
    <citation type="journal article" date="2004" name="Arch. Biochem. Biophys.">
        <title>A gene cluster for biosynthesis of kanamycin from Streptomyces kanamyceticus: comparison with gentamicin biosynthetic gene cluster.</title>
        <authorList>
            <person name="Kharel M.K."/>
            <person name="Subba B."/>
            <person name="Basnet D.B."/>
            <person name="Woo J.S."/>
            <person name="Lee H.C."/>
            <person name="Liou K."/>
            <person name="Sohng J.K."/>
        </authorList>
    </citation>
    <scope>NUCLEOTIDE SEQUENCE [GENOMIC DNA]</scope>
    <source>
        <strain>ATCC 12853 / DSM 40500 / NBRC 13414 / NCIMB 9343 / NRRL B-2535 / VKM Ac-837</strain>
    </source>
</reference>
<reference key="2">
    <citation type="journal article" date="2011" name="Nat. Chem. Biol.">
        <title>Discovery of parallel pathways of kanamycin biosynthesis allows antibiotic manipulation.</title>
        <authorList>
            <person name="Park J.W."/>
            <person name="Park S.R."/>
            <person name="Nepal K.K."/>
            <person name="Han A.R."/>
            <person name="Ban Y.H."/>
            <person name="Yoo Y.J."/>
            <person name="Kim E.J."/>
            <person name="Kim E.M."/>
            <person name="Kim D."/>
            <person name="Sohng J.K."/>
            <person name="Yoon Y.J."/>
        </authorList>
    </citation>
    <scope>FUNCTION</scope>
    <scope>CATALYTIC ACTIVITY</scope>
    <scope>PATHWAY</scope>
    <scope>BIOPHYSICOCHEMICAL PROPERTIES</scope>
    <source>
        <strain>ATCC 12853 / DSM 40500 / NBRC 13414 / NCIMB 9343 / NRRL B-2535 / VKM Ac-837</strain>
    </source>
</reference>
<comment type="function">
    <text evidence="1">Glycosyltransferase involved in the biosynthesis of kanamycins by catalyzing the transfer of the hexose kanosamine from UDP-alpha-D-kanosamine to disaccharide precursors. Can also use UDP-alpha-D-glucose as sugar donor with much lower efficiency.</text>
</comment>
<comment type="catalytic activity">
    <reaction evidence="1">
        <text>2'-deamino-2'-hydroxyneamine + UDP-alpha-D-kanosamine = kanamycin A + UDP + H(+)</text>
        <dbReference type="Rhea" id="RHEA:35795"/>
        <dbReference type="ChEBI" id="CHEBI:15378"/>
        <dbReference type="ChEBI" id="CHEBI:58214"/>
        <dbReference type="ChEBI" id="CHEBI:58223"/>
        <dbReference type="ChEBI" id="CHEBI:67213"/>
        <dbReference type="ChEBI" id="CHEBI:71964"/>
        <dbReference type="EC" id="2.4.1.301"/>
    </reaction>
</comment>
<comment type="catalytic activity">
    <reaction evidence="1">
        <text>neamine + UDP-alpha-D-kanosamine = kanamycin B + UDP + H(+)</text>
        <dbReference type="Rhea" id="RHEA:35783"/>
        <dbReference type="ChEBI" id="CHEBI:15378"/>
        <dbReference type="ChEBI" id="CHEBI:58223"/>
        <dbReference type="ChEBI" id="CHEBI:58549"/>
        <dbReference type="ChEBI" id="CHEBI:65076"/>
        <dbReference type="ChEBI" id="CHEBI:71964"/>
        <dbReference type="EC" id="2.4.1.301"/>
    </reaction>
</comment>
<comment type="catalytic activity">
    <reaction evidence="1">
        <text>paromamine + UDP-alpha-D-kanosamine = kanamycin C + UDP + H(+)</text>
        <dbReference type="Rhea" id="RHEA:35787"/>
        <dbReference type="ChEBI" id="CHEBI:15378"/>
        <dbReference type="ChEBI" id="CHEBI:58223"/>
        <dbReference type="ChEBI" id="CHEBI:65015"/>
        <dbReference type="ChEBI" id="CHEBI:71964"/>
        <dbReference type="ChEBI" id="CHEBI:72755"/>
        <dbReference type="EC" id="2.4.1.301"/>
    </reaction>
</comment>
<comment type="catalytic activity">
    <reaction evidence="1">
        <text>2'-deamino-2'-hydroxyparomamine + UDP-alpha-D-kanosamine = kanamycin X + UDP + H(+)</text>
        <dbReference type="Rhea" id="RHEA:35791"/>
        <dbReference type="ChEBI" id="CHEBI:15378"/>
        <dbReference type="ChEBI" id="CHEBI:58223"/>
        <dbReference type="ChEBI" id="CHEBI:65071"/>
        <dbReference type="ChEBI" id="CHEBI:71964"/>
        <dbReference type="ChEBI" id="CHEBI:72756"/>
        <dbReference type="EC" id="2.4.1.301"/>
    </reaction>
</comment>
<comment type="biophysicochemical properties">
    <kinetics>
        <KM evidence="1">0.03 mM for UDP-alpha-D-kanosamine</KM>
        <KM evidence="1">0.26 mM for UDP-alpha-D-glucose</KM>
        <KM evidence="1">0.05 mM for paromamine (in the presence of UDP-alpha-D-kanosamine as cosubstrate)</KM>
        <KM evidence="1">0.25 mM for paromamine (in the presence of UDP-alpha-D-glucose as cosubstrate)</KM>
        <text>kcat is 3.36 min(-1) and 3.18 min(-1) for the reaction with paromamine as acceptor and UDP-alpha-D-kanosamine or UDP-alpha-D-glucose as donor, respectively.</text>
    </kinetics>
</comment>
<comment type="pathway">
    <text evidence="1">Antibiotic biosynthesis; kanamycin biosynthesis.</text>
</comment>
<comment type="similarity">
    <text evidence="2">Belongs to the glycosyltransferase group 1 family.</text>
</comment>
<gene>
    <name type="primary">kanE</name>
</gene>
<proteinExistence type="evidence at protein level"/>
<sequence length="386" mass="43218">MHLLVRALVEEMAGRGVPHRVLTMSPPKVPKDIRIGQRIKVHARRLPVLPIPSDLEGYFGLVGAWAKGSLLWVLRNRKRLRREIGARVHAHCDGSGAAAFYPYLMSRILGVPLVVQIHSSRYLSQHPTTLFERVTDPIAKWAERHAVRKAAAVLMLTDRARDEMRRKAQLPAERVHRLAYLASDQFKDADTEARRAELRERYGLDDRPIVLYVGRIAAEKGVEYYIEAAAELTRRGRDCQFVIAGDGPARPDLEKLIGARGLRDRVTITGFMSHEFIPSMISLGELVVLPSRYEELGIVILECMTMRRPLVAHDVNGVNKLIEDGTTGIVVPPFRTPEMADAVERLLDDPELRERMAENAAPLPAAKYSLSAAGDQLAGIYREIGL</sequence>
<feature type="chain" id="PRO_0000421739" description="Alpha-D-kanosaminyltransferase">
    <location>
        <begin position="1"/>
        <end position="386"/>
    </location>
</feature>
<protein>
    <recommendedName>
        <fullName>Alpha-D-kanosaminyltransferase</fullName>
        <ecNumber>2.4.1.301</ecNumber>
    </recommendedName>
    <alternativeName>
        <fullName>2'-deamino-2'-hydroxyneamine 1-alpha-D-kanosaminyltransferase</fullName>
    </alternativeName>
    <alternativeName>
        <fullName>Glycosyltransferase KanE</fullName>
    </alternativeName>
    <alternativeName>
        <fullName>Kanamycin biosynthesis protein E</fullName>
    </alternativeName>
</protein>